<evidence type="ECO:0000255" key="1">
    <source>
        <dbReference type="HAMAP-Rule" id="MF_00394"/>
    </source>
</evidence>
<sequence>MEKQTVAVLGPGSWGTALSQVLNDNGHEVRIWGNLPEQINEINTHHTNKHYFKDVVLDENIIAYTDLAETLKDVDAILFVVPTKVTRLVAQQVAQTLDHKVIIMHASKGLEPDSHKRLSTILEEEIPEHLRSDIVVVSGPSHAEETIVRDLTLITAASKDLQTAQYVQKLFSNHYFRLYTNTDVIGVETAGALKNIIAVGAGALHGLGFGDNAKAAIIARGLAEITRLGVALGASPLTYSGLSGVGDLIVTGTSIHSRNWRAGDALGRGESLADIEANMGMVIEGISTTRAAYELAQELGVYMPITQAIYQVIYHGTNIKDAIYDIMNNEFKAENEWS</sequence>
<reference key="1">
    <citation type="journal article" date="2010" name="Genome Biol.">
        <title>Structure and dynamics of the pan-genome of Streptococcus pneumoniae and closely related species.</title>
        <authorList>
            <person name="Donati C."/>
            <person name="Hiller N.L."/>
            <person name="Tettelin H."/>
            <person name="Muzzi A."/>
            <person name="Croucher N.J."/>
            <person name="Angiuoli S.V."/>
            <person name="Oggioni M."/>
            <person name="Dunning Hotopp J.C."/>
            <person name="Hu F.Z."/>
            <person name="Riley D.R."/>
            <person name="Covacci A."/>
            <person name="Mitchell T.J."/>
            <person name="Bentley S.D."/>
            <person name="Kilian M."/>
            <person name="Ehrlich G.D."/>
            <person name="Rappuoli R."/>
            <person name="Moxon E.R."/>
            <person name="Masignani V."/>
        </authorList>
    </citation>
    <scope>NUCLEOTIDE SEQUENCE [LARGE SCALE GENOMIC DNA]</scope>
    <source>
        <strain>Taiwan19F-14</strain>
    </source>
</reference>
<comment type="function">
    <text evidence="1">Catalyzes the reduction of the glycolytic intermediate dihydroxyacetone phosphate (DHAP) to sn-glycerol 3-phosphate (G3P), the key precursor for phospholipid synthesis.</text>
</comment>
<comment type="catalytic activity">
    <reaction evidence="1">
        <text>sn-glycerol 3-phosphate + NAD(+) = dihydroxyacetone phosphate + NADH + H(+)</text>
        <dbReference type="Rhea" id="RHEA:11092"/>
        <dbReference type="ChEBI" id="CHEBI:15378"/>
        <dbReference type="ChEBI" id="CHEBI:57540"/>
        <dbReference type="ChEBI" id="CHEBI:57597"/>
        <dbReference type="ChEBI" id="CHEBI:57642"/>
        <dbReference type="ChEBI" id="CHEBI:57945"/>
        <dbReference type="EC" id="1.1.1.94"/>
    </reaction>
    <physiologicalReaction direction="right-to-left" evidence="1">
        <dbReference type="Rhea" id="RHEA:11094"/>
    </physiologicalReaction>
</comment>
<comment type="catalytic activity">
    <reaction evidence="1">
        <text>sn-glycerol 3-phosphate + NADP(+) = dihydroxyacetone phosphate + NADPH + H(+)</text>
        <dbReference type="Rhea" id="RHEA:11096"/>
        <dbReference type="ChEBI" id="CHEBI:15378"/>
        <dbReference type="ChEBI" id="CHEBI:57597"/>
        <dbReference type="ChEBI" id="CHEBI:57642"/>
        <dbReference type="ChEBI" id="CHEBI:57783"/>
        <dbReference type="ChEBI" id="CHEBI:58349"/>
        <dbReference type="EC" id="1.1.1.94"/>
    </reaction>
    <physiologicalReaction direction="right-to-left" evidence="1">
        <dbReference type="Rhea" id="RHEA:11098"/>
    </physiologicalReaction>
</comment>
<comment type="pathway">
    <text evidence="1">Membrane lipid metabolism; glycerophospholipid metabolism.</text>
</comment>
<comment type="subcellular location">
    <subcellularLocation>
        <location evidence="1">Cytoplasm</location>
    </subcellularLocation>
</comment>
<comment type="similarity">
    <text evidence="1">Belongs to the NAD-dependent glycerol-3-phosphate dehydrogenase family.</text>
</comment>
<gene>
    <name evidence="1" type="primary">gpsA</name>
    <name type="ordered locus">SPT_2101</name>
</gene>
<accession>C1CTZ5</accession>
<dbReference type="EC" id="1.1.1.94" evidence="1"/>
<dbReference type="EMBL" id="CP000921">
    <property type="protein sequence ID" value="ACO24112.1"/>
    <property type="molecule type" value="Genomic_DNA"/>
</dbReference>
<dbReference type="RefSeq" id="WP_000415103.1">
    <property type="nucleotide sequence ID" value="NC_012469.1"/>
</dbReference>
<dbReference type="SMR" id="C1CTZ5"/>
<dbReference type="KEGG" id="snt:SPT_2101"/>
<dbReference type="HOGENOM" id="CLU_033449_0_2_9"/>
<dbReference type="UniPathway" id="UPA00940"/>
<dbReference type="GO" id="GO:0005829">
    <property type="term" value="C:cytosol"/>
    <property type="evidence" value="ECO:0007669"/>
    <property type="project" value="TreeGrafter"/>
</dbReference>
<dbReference type="GO" id="GO:0047952">
    <property type="term" value="F:glycerol-3-phosphate dehydrogenase [NAD(P)+] activity"/>
    <property type="evidence" value="ECO:0007669"/>
    <property type="project" value="UniProtKB-UniRule"/>
</dbReference>
<dbReference type="GO" id="GO:0051287">
    <property type="term" value="F:NAD binding"/>
    <property type="evidence" value="ECO:0007669"/>
    <property type="project" value="InterPro"/>
</dbReference>
<dbReference type="GO" id="GO:0005975">
    <property type="term" value="P:carbohydrate metabolic process"/>
    <property type="evidence" value="ECO:0007669"/>
    <property type="project" value="InterPro"/>
</dbReference>
<dbReference type="GO" id="GO:0046167">
    <property type="term" value="P:glycerol-3-phosphate biosynthetic process"/>
    <property type="evidence" value="ECO:0007669"/>
    <property type="project" value="UniProtKB-UniRule"/>
</dbReference>
<dbReference type="GO" id="GO:0046168">
    <property type="term" value="P:glycerol-3-phosphate catabolic process"/>
    <property type="evidence" value="ECO:0007669"/>
    <property type="project" value="InterPro"/>
</dbReference>
<dbReference type="GO" id="GO:0006650">
    <property type="term" value="P:glycerophospholipid metabolic process"/>
    <property type="evidence" value="ECO:0007669"/>
    <property type="project" value="UniProtKB-UniRule"/>
</dbReference>
<dbReference type="GO" id="GO:0008654">
    <property type="term" value="P:phospholipid biosynthetic process"/>
    <property type="evidence" value="ECO:0007669"/>
    <property type="project" value="UniProtKB-KW"/>
</dbReference>
<dbReference type="FunFam" id="1.10.1040.10:FF:000001">
    <property type="entry name" value="Glycerol-3-phosphate dehydrogenase [NAD(P)+]"/>
    <property type="match status" value="1"/>
</dbReference>
<dbReference type="FunFam" id="3.40.50.720:FF:000019">
    <property type="entry name" value="Glycerol-3-phosphate dehydrogenase [NAD(P)+]"/>
    <property type="match status" value="1"/>
</dbReference>
<dbReference type="Gene3D" id="1.10.1040.10">
    <property type="entry name" value="N-(1-d-carboxylethyl)-l-norvaline Dehydrogenase, domain 2"/>
    <property type="match status" value="1"/>
</dbReference>
<dbReference type="Gene3D" id="3.40.50.720">
    <property type="entry name" value="NAD(P)-binding Rossmann-like Domain"/>
    <property type="match status" value="1"/>
</dbReference>
<dbReference type="HAMAP" id="MF_00394">
    <property type="entry name" value="NAD_Glyc3P_dehydrog"/>
    <property type="match status" value="1"/>
</dbReference>
<dbReference type="InterPro" id="IPR008927">
    <property type="entry name" value="6-PGluconate_DH-like_C_sf"/>
</dbReference>
<dbReference type="InterPro" id="IPR013328">
    <property type="entry name" value="6PGD_dom2"/>
</dbReference>
<dbReference type="InterPro" id="IPR006168">
    <property type="entry name" value="G3P_DH_NAD-dep"/>
</dbReference>
<dbReference type="InterPro" id="IPR006109">
    <property type="entry name" value="G3P_DH_NAD-dep_C"/>
</dbReference>
<dbReference type="InterPro" id="IPR011128">
    <property type="entry name" value="G3P_DH_NAD-dep_N"/>
</dbReference>
<dbReference type="InterPro" id="IPR036291">
    <property type="entry name" value="NAD(P)-bd_dom_sf"/>
</dbReference>
<dbReference type="NCBIfam" id="NF000940">
    <property type="entry name" value="PRK00094.1-2"/>
    <property type="match status" value="1"/>
</dbReference>
<dbReference type="NCBIfam" id="NF000941">
    <property type="entry name" value="PRK00094.1-3"/>
    <property type="match status" value="1"/>
</dbReference>
<dbReference type="NCBIfam" id="NF000942">
    <property type="entry name" value="PRK00094.1-4"/>
    <property type="match status" value="1"/>
</dbReference>
<dbReference type="PANTHER" id="PTHR11728">
    <property type="entry name" value="GLYCEROL-3-PHOSPHATE DEHYDROGENASE"/>
    <property type="match status" value="1"/>
</dbReference>
<dbReference type="PANTHER" id="PTHR11728:SF1">
    <property type="entry name" value="GLYCEROL-3-PHOSPHATE DEHYDROGENASE [NAD(+)] 2, CHLOROPLASTIC"/>
    <property type="match status" value="1"/>
</dbReference>
<dbReference type="Pfam" id="PF07479">
    <property type="entry name" value="NAD_Gly3P_dh_C"/>
    <property type="match status" value="1"/>
</dbReference>
<dbReference type="Pfam" id="PF01210">
    <property type="entry name" value="NAD_Gly3P_dh_N"/>
    <property type="match status" value="1"/>
</dbReference>
<dbReference type="PIRSF" id="PIRSF000114">
    <property type="entry name" value="Glycerol-3-P_dh"/>
    <property type="match status" value="1"/>
</dbReference>
<dbReference type="PRINTS" id="PR00077">
    <property type="entry name" value="GPDHDRGNASE"/>
</dbReference>
<dbReference type="SUPFAM" id="SSF48179">
    <property type="entry name" value="6-phosphogluconate dehydrogenase C-terminal domain-like"/>
    <property type="match status" value="1"/>
</dbReference>
<dbReference type="SUPFAM" id="SSF51735">
    <property type="entry name" value="NAD(P)-binding Rossmann-fold domains"/>
    <property type="match status" value="1"/>
</dbReference>
<dbReference type="PROSITE" id="PS00957">
    <property type="entry name" value="NAD_G3PDH"/>
    <property type="match status" value="1"/>
</dbReference>
<keyword id="KW-0963">Cytoplasm</keyword>
<keyword id="KW-0444">Lipid biosynthesis</keyword>
<keyword id="KW-0443">Lipid metabolism</keyword>
<keyword id="KW-0520">NAD</keyword>
<keyword id="KW-0521">NADP</keyword>
<keyword id="KW-0547">Nucleotide-binding</keyword>
<keyword id="KW-0560">Oxidoreductase</keyword>
<keyword id="KW-0594">Phospholipid biosynthesis</keyword>
<keyword id="KW-1208">Phospholipid metabolism</keyword>
<proteinExistence type="inferred from homology"/>
<feature type="chain" id="PRO_1000190177" description="Glycerol-3-phosphate dehydrogenase [NAD(P)+]">
    <location>
        <begin position="1"/>
        <end position="338"/>
    </location>
</feature>
<feature type="active site" description="Proton acceptor" evidence="1">
    <location>
        <position position="194"/>
    </location>
</feature>
<feature type="binding site" evidence="1">
    <location>
        <position position="13"/>
    </location>
    <ligand>
        <name>NADPH</name>
        <dbReference type="ChEBI" id="CHEBI:57783"/>
    </ligand>
</feature>
<feature type="binding site" evidence="1">
    <location>
        <position position="14"/>
    </location>
    <ligand>
        <name>NADPH</name>
        <dbReference type="ChEBI" id="CHEBI:57783"/>
    </ligand>
</feature>
<feature type="binding site" evidence="1">
    <location>
        <position position="108"/>
    </location>
    <ligand>
        <name>NADPH</name>
        <dbReference type="ChEBI" id="CHEBI:57783"/>
    </ligand>
</feature>
<feature type="binding site" evidence="1">
    <location>
        <position position="108"/>
    </location>
    <ligand>
        <name>sn-glycerol 3-phosphate</name>
        <dbReference type="ChEBI" id="CHEBI:57597"/>
    </ligand>
</feature>
<feature type="binding site" evidence="1">
    <location>
        <position position="139"/>
    </location>
    <ligand>
        <name>sn-glycerol 3-phosphate</name>
        <dbReference type="ChEBI" id="CHEBI:57597"/>
    </ligand>
</feature>
<feature type="binding site" evidence="1">
    <location>
        <position position="141"/>
    </location>
    <ligand>
        <name>sn-glycerol 3-phosphate</name>
        <dbReference type="ChEBI" id="CHEBI:57597"/>
    </ligand>
</feature>
<feature type="binding site" evidence="1">
    <location>
        <position position="143"/>
    </location>
    <ligand>
        <name>NADPH</name>
        <dbReference type="ChEBI" id="CHEBI:57783"/>
    </ligand>
</feature>
<feature type="binding site" evidence="1">
    <location>
        <position position="194"/>
    </location>
    <ligand>
        <name>sn-glycerol 3-phosphate</name>
        <dbReference type="ChEBI" id="CHEBI:57597"/>
    </ligand>
</feature>
<feature type="binding site" evidence="1">
    <location>
        <position position="247"/>
    </location>
    <ligand>
        <name>sn-glycerol 3-phosphate</name>
        <dbReference type="ChEBI" id="CHEBI:57597"/>
    </ligand>
</feature>
<feature type="binding site" evidence="1">
    <location>
        <position position="257"/>
    </location>
    <ligand>
        <name>sn-glycerol 3-phosphate</name>
        <dbReference type="ChEBI" id="CHEBI:57597"/>
    </ligand>
</feature>
<feature type="binding site" evidence="1">
    <location>
        <position position="258"/>
    </location>
    <ligand>
        <name>NADPH</name>
        <dbReference type="ChEBI" id="CHEBI:57783"/>
    </ligand>
</feature>
<feature type="binding site" evidence="1">
    <location>
        <position position="258"/>
    </location>
    <ligand>
        <name>sn-glycerol 3-phosphate</name>
        <dbReference type="ChEBI" id="CHEBI:57597"/>
    </ligand>
</feature>
<feature type="binding site" evidence="1">
    <location>
        <position position="259"/>
    </location>
    <ligand>
        <name>sn-glycerol 3-phosphate</name>
        <dbReference type="ChEBI" id="CHEBI:57597"/>
    </ligand>
</feature>
<feature type="binding site" evidence="1">
    <location>
        <position position="282"/>
    </location>
    <ligand>
        <name>NADPH</name>
        <dbReference type="ChEBI" id="CHEBI:57783"/>
    </ligand>
</feature>
<feature type="binding site" evidence="1">
    <location>
        <position position="284"/>
    </location>
    <ligand>
        <name>NADPH</name>
        <dbReference type="ChEBI" id="CHEBI:57783"/>
    </ligand>
</feature>
<protein>
    <recommendedName>
        <fullName evidence="1">Glycerol-3-phosphate dehydrogenase [NAD(P)+]</fullName>
        <ecNumber evidence="1">1.1.1.94</ecNumber>
    </recommendedName>
    <alternativeName>
        <fullName evidence="1">NAD(P)(+)-dependent glycerol-3-phosphate dehydrogenase</fullName>
    </alternativeName>
    <alternativeName>
        <fullName evidence="1">NAD(P)H-dependent dihydroxyacetone-phosphate reductase</fullName>
    </alternativeName>
</protein>
<organism>
    <name type="scientific">Streptococcus pneumoniae (strain Taiwan19F-14)</name>
    <dbReference type="NCBI Taxonomy" id="487213"/>
    <lineage>
        <taxon>Bacteria</taxon>
        <taxon>Bacillati</taxon>
        <taxon>Bacillota</taxon>
        <taxon>Bacilli</taxon>
        <taxon>Lactobacillales</taxon>
        <taxon>Streptococcaceae</taxon>
        <taxon>Streptococcus</taxon>
    </lineage>
</organism>
<name>GPDA_STRZT</name>